<dbReference type="EMBL" id="BX640450">
    <property type="protein sequence ID" value="CAE34684.1"/>
    <property type="molecule type" value="Genomic_DNA"/>
</dbReference>
<dbReference type="SMR" id="Q7WFF3"/>
<dbReference type="KEGG" id="bbr:BB4321"/>
<dbReference type="eggNOG" id="COG0830">
    <property type="taxonomic scope" value="Bacteria"/>
</dbReference>
<dbReference type="HOGENOM" id="CLU_049215_2_1_4"/>
<dbReference type="Proteomes" id="UP000001027">
    <property type="component" value="Chromosome"/>
</dbReference>
<dbReference type="GO" id="GO:0005737">
    <property type="term" value="C:cytoplasm"/>
    <property type="evidence" value="ECO:0007669"/>
    <property type="project" value="UniProtKB-SubCell"/>
</dbReference>
<dbReference type="GO" id="GO:0016151">
    <property type="term" value="F:nickel cation binding"/>
    <property type="evidence" value="ECO:0007669"/>
    <property type="project" value="UniProtKB-UniRule"/>
</dbReference>
<dbReference type="Gene3D" id="1.10.4190.10">
    <property type="entry name" value="Urease accessory protein UreF"/>
    <property type="match status" value="1"/>
</dbReference>
<dbReference type="HAMAP" id="MF_01385">
    <property type="entry name" value="UreF"/>
    <property type="match status" value="1"/>
</dbReference>
<dbReference type="InterPro" id="IPR002639">
    <property type="entry name" value="UreF"/>
</dbReference>
<dbReference type="InterPro" id="IPR038277">
    <property type="entry name" value="UreF_sf"/>
</dbReference>
<dbReference type="PANTHER" id="PTHR33620">
    <property type="entry name" value="UREASE ACCESSORY PROTEIN F"/>
    <property type="match status" value="1"/>
</dbReference>
<dbReference type="PANTHER" id="PTHR33620:SF1">
    <property type="entry name" value="UREASE ACCESSORY PROTEIN F"/>
    <property type="match status" value="1"/>
</dbReference>
<dbReference type="Pfam" id="PF01730">
    <property type="entry name" value="UreF"/>
    <property type="match status" value="1"/>
</dbReference>
<dbReference type="PIRSF" id="PIRSF009467">
    <property type="entry name" value="Ureas_acces_UreF"/>
    <property type="match status" value="1"/>
</dbReference>
<evidence type="ECO:0000255" key="1">
    <source>
        <dbReference type="HAMAP-Rule" id="MF_01385"/>
    </source>
</evidence>
<comment type="function">
    <text evidence="1">Required for maturation of urease via the functional incorporation of the urease nickel metallocenter.</text>
</comment>
<comment type="subunit">
    <text evidence="1">UreD, UreF and UreG form a complex that acts as a GTP-hydrolysis-dependent molecular chaperone, activating the urease apoprotein by helping to assemble the nickel containing metallocenter of UreC. The UreE protein probably delivers the nickel.</text>
</comment>
<comment type="subcellular location">
    <subcellularLocation>
        <location evidence="1">Cytoplasm</location>
    </subcellularLocation>
</comment>
<comment type="similarity">
    <text evidence="1">Belongs to the UreF family.</text>
</comment>
<gene>
    <name evidence="1" type="primary">ureF</name>
    <name type="ordered locus">BB4321</name>
</gene>
<keyword id="KW-0143">Chaperone</keyword>
<keyword id="KW-0963">Cytoplasm</keyword>
<keyword id="KW-0996">Nickel insertion</keyword>
<sequence length="220" mass="23874">MHLSSPALPIGGFSYSQGLEAAIELGLVHDEASTLAWIESQLVTVMARAEAPLWCLLFEAWRAGDDAAAHGWNQWFHASRETRELRQETEQMGRSLARLAQELGWGTAATRAAVAALRPATLPAVHACACAMWALPREAGLGAYVFSWLENQVAAAIKGVPLGQMAGQRMLERLRAGLPAVLADARARAGATPPRLDTFAPQYAMVSARHETQFSRLFRS</sequence>
<protein>
    <recommendedName>
        <fullName evidence="1">Urease accessory protein UreF</fullName>
    </recommendedName>
</protein>
<proteinExistence type="inferred from homology"/>
<feature type="chain" id="PRO_0000344078" description="Urease accessory protein UreF">
    <location>
        <begin position="1"/>
        <end position="220"/>
    </location>
</feature>
<name>UREF_BORBR</name>
<accession>Q7WFF3</accession>
<reference key="1">
    <citation type="journal article" date="2003" name="Nat. Genet.">
        <title>Comparative analysis of the genome sequences of Bordetella pertussis, Bordetella parapertussis and Bordetella bronchiseptica.</title>
        <authorList>
            <person name="Parkhill J."/>
            <person name="Sebaihia M."/>
            <person name="Preston A."/>
            <person name="Murphy L.D."/>
            <person name="Thomson N.R."/>
            <person name="Harris D.E."/>
            <person name="Holden M.T.G."/>
            <person name="Churcher C.M."/>
            <person name="Bentley S.D."/>
            <person name="Mungall K.L."/>
            <person name="Cerdeno-Tarraga A.-M."/>
            <person name="Temple L."/>
            <person name="James K.D."/>
            <person name="Harris B."/>
            <person name="Quail M.A."/>
            <person name="Achtman M."/>
            <person name="Atkin R."/>
            <person name="Baker S."/>
            <person name="Basham D."/>
            <person name="Bason N."/>
            <person name="Cherevach I."/>
            <person name="Chillingworth T."/>
            <person name="Collins M."/>
            <person name="Cronin A."/>
            <person name="Davis P."/>
            <person name="Doggett J."/>
            <person name="Feltwell T."/>
            <person name="Goble A."/>
            <person name="Hamlin N."/>
            <person name="Hauser H."/>
            <person name="Holroyd S."/>
            <person name="Jagels K."/>
            <person name="Leather S."/>
            <person name="Moule S."/>
            <person name="Norberczak H."/>
            <person name="O'Neil S."/>
            <person name="Ormond D."/>
            <person name="Price C."/>
            <person name="Rabbinowitsch E."/>
            <person name="Rutter S."/>
            <person name="Sanders M."/>
            <person name="Saunders D."/>
            <person name="Seeger K."/>
            <person name="Sharp S."/>
            <person name="Simmonds M."/>
            <person name="Skelton J."/>
            <person name="Squares R."/>
            <person name="Squares S."/>
            <person name="Stevens K."/>
            <person name="Unwin L."/>
            <person name="Whitehead S."/>
            <person name="Barrell B.G."/>
            <person name="Maskell D.J."/>
        </authorList>
    </citation>
    <scope>NUCLEOTIDE SEQUENCE [LARGE SCALE GENOMIC DNA]</scope>
    <source>
        <strain>ATCC BAA-588 / NCTC 13252 / RB50</strain>
    </source>
</reference>
<organism>
    <name type="scientific">Bordetella bronchiseptica (strain ATCC BAA-588 / NCTC 13252 / RB50)</name>
    <name type="common">Alcaligenes bronchisepticus</name>
    <dbReference type="NCBI Taxonomy" id="257310"/>
    <lineage>
        <taxon>Bacteria</taxon>
        <taxon>Pseudomonadati</taxon>
        <taxon>Pseudomonadota</taxon>
        <taxon>Betaproteobacteria</taxon>
        <taxon>Burkholderiales</taxon>
        <taxon>Alcaligenaceae</taxon>
        <taxon>Bordetella</taxon>
    </lineage>
</organism>